<name>PP191_ARATH</name>
<keyword id="KW-1185">Reference proteome</keyword>
<keyword id="KW-0677">Repeat</keyword>
<evidence type="ECO:0000305" key="1"/>
<accession>Q9ZUT5</accession>
<organism>
    <name type="scientific">Arabidopsis thaliana</name>
    <name type="common">Mouse-ear cress</name>
    <dbReference type="NCBI Taxonomy" id="3702"/>
    <lineage>
        <taxon>Eukaryota</taxon>
        <taxon>Viridiplantae</taxon>
        <taxon>Streptophyta</taxon>
        <taxon>Embryophyta</taxon>
        <taxon>Tracheophyta</taxon>
        <taxon>Spermatophyta</taxon>
        <taxon>Magnoliopsida</taxon>
        <taxon>eudicotyledons</taxon>
        <taxon>Gunneridae</taxon>
        <taxon>Pentapetalae</taxon>
        <taxon>rosids</taxon>
        <taxon>malvids</taxon>
        <taxon>Brassicales</taxon>
        <taxon>Brassicaceae</taxon>
        <taxon>Camelineae</taxon>
        <taxon>Arabidopsis</taxon>
    </lineage>
</organism>
<proteinExistence type="evidence at transcript level"/>
<reference key="1">
    <citation type="journal article" date="1999" name="Nature">
        <title>Sequence and analysis of chromosome 2 of the plant Arabidopsis thaliana.</title>
        <authorList>
            <person name="Lin X."/>
            <person name="Kaul S."/>
            <person name="Rounsley S.D."/>
            <person name="Shea T.P."/>
            <person name="Benito M.-I."/>
            <person name="Town C.D."/>
            <person name="Fujii C.Y."/>
            <person name="Mason T.M."/>
            <person name="Bowman C.L."/>
            <person name="Barnstead M.E."/>
            <person name="Feldblyum T.V."/>
            <person name="Buell C.R."/>
            <person name="Ketchum K.A."/>
            <person name="Lee J.J."/>
            <person name="Ronning C.M."/>
            <person name="Koo H.L."/>
            <person name="Moffat K.S."/>
            <person name="Cronin L.A."/>
            <person name="Shen M."/>
            <person name="Pai G."/>
            <person name="Van Aken S."/>
            <person name="Umayam L."/>
            <person name="Tallon L.J."/>
            <person name="Gill J.E."/>
            <person name="Adams M.D."/>
            <person name="Carrera A.J."/>
            <person name="Creasy T.H."/>
            <person name="Goodman H.M."/>
            <person name="Somerville C.R."/>
            <person name="Copenhaver G.P."/>
            <person name="Preuss D."/>
            <person name="Nierman W.C."/>
            <person name="White O."/>
            <person name="Eisen J.A."/>
            <person name="Salzberg S.L."/>
            <person name="Fraser C.M."/>
            <person name="Venter J.C."/>
        </authorList>
    </citation>
    <scope>NUCLEOTIDE SEQUENCE [LARGE SCALE GENOMIC DNA]</scope>
    <source>
        <strain>cv. Columbia</strain>
    </source>
</reference>
<reference key="2">
    <citation type="journal article" date="2017" name="Plant J.">
        <title>Araport11: a complete reannotation of the Arabidopsis thaliana reference genome.</title>
        <authorList>
            <person name="Cheng C.Y."/>
            <person name="Krishnakumar V."/>
            <person name="Chan A.P."/>
            <person name="Thibaud-Nissen F."/>
            <person name="Schobel S."/>
            <person name="Town C.D."/>
        </authorList>
    </citation>
    <scope>GENOME REANNOTATION</scope>
    <source>
        <strain>cv. Columbia</strain>
    </source>
</reference>
<reference key="3">
    <citation type="submission" date="2006-07" db="EMBL/GenBank/DDBJ databases">
        <title>Large-scale analysis of RIKEN Arabidopsis full-length (RAFL) cDNAs.</title>
        <authorList>
            <person name="Totoki Y."/>
            <person name="Seki M."/>
            <person name="Ishida J."/>
            <person name="Nakajima M."/>
            <person name="Enju A."/>
            <person name="Kamiya A."/>
            <person name="Narusaka M."/>
            <person name="Shin-i T."/>
            <person name="Nakagawa M."/>
            <person name="Sakamoto N."/>
            <person name="Oishi K."/>
            <person name="Kohara Y."/>
            <person name="Kobayashi M."/>
            <person name="Toyoda A."/>
            <person name="Sakaki Y."/>
            <person name="Sakurai T."/>
            <person name="Iida K."/>
            <person name="Akiyama K."/>
            <person name="Satou M."/>
            <person name="Toyoda T."/>
            <person name="Konagaya A."/>
            <person name="Carninci P."/>
            <person name="Kawai J."/>
            <person name="Hayashizaki Y."/>
            <person name="Shinozaki K."/>
        </authorList>
    </citation>
    <scope>NUCLEOTIDE SEQUENCE [LARGE SCALE MRNA]</scope>
    <source>
        <strain>cv. Columbia</strain>
    </source>
</reference>
<reference key="4">
    <citation type="journal article" date="2000" name="Plant Mol. Biol.">
        <title>In Arabidopsis thaliana, 1% of the genome codes for a novel protein family unique to plants.</title>
        <authorList>
            <person name="Aubourg S."/>
            <person name="Boudet N."/>
            <person name="Kreis M."/>
            <person name="Lecharny A."/>
        </authorList>
    </citation>
    <scope>GENE FAMILY</scope>
</reference>
<reference key="5">
    <citation type="journal article" date="2004" name="Plant Cell">
        <title>Genome-wide analysis of Arabidopsis pentatricopeptide repeat proteins reveals their essential role in organelle biogenesis.</title>
        <authorList>
            <person name="Lurin C."/>
            <person name="Andres C."/>
            <person name="Aubourg S."/>
            <person name="Bellaoui M."/>
            <person name="Bitton F."/>
            <person name="Bruyere C."/>
            <person name="Caboche M."/>
            <person name="Debast C."/>
            <person name="Gualberto J."/>
            <person name="Hoffmann B."/>
            <person name="Lecharny A."/>
            <person name="Le Ret M."/>
            <person name="Martin-Magniette M.-L."/>
            <person name="Mireau H."/>
            <person name="Peeters N."/>
            <person name="Renou J.-P."/>
            <person name="Szurek B."/>
            <person name="Taconnat L."/>
            <person name="Small I."/>
        </authorList>
    </citation>
    <scope>GENE FAMILY</scope>
</reference>
<comment type="similarity">
    <text evidence="1">Belongs to the PPR family. PCMP-E subfamily.</text>
</comment>
<comment type="online information" name="Pentatricopeptide repeat proteins">
    <link uri="https://ppr.plantenergy.uwa.edu.au"/>
</comment>
<gene>
    <name type="primary">PCMP-E49</name>
    <name type="ordered locus">At2g37310</name>
    <name type="ORF">F3G5.10</name>
</gene>
<protein>
    <recommendedName>
        <fullName>Pentatricopeptide repeat-containing protein At2g37310</fullName>
    </recommendedName>
</protein>
<dbReference type="EMBL" id="AC005896">
    <property type="protein sequence ID" value="AAC98051.1"/>
    <property type="molecule type" value="Genomic_DNA"/>
</dbReference>
<dbReference type="EMBL" id="CP002685">
    <property type="protein sequence ID" value="AEC09382.1"/>
    <property type="molecule type" value="Genomic_DNA"/>
</dbReference>
<dbReference type="EMBL" id="AK230376">
    <property type="protein sequence ID" value="BAF02175.1"/>
    <property type="molecule type" value="mRNA"/>
</dbReference>
<dbReference type="PIR" id="B84791">
    <property type="entry name" value="B84791"/>
</dbReference>
<dbReference type="RefSeq" id="NP_181268.1">
    <property type="nucleotide sequence ID" value="NM_129287.4"/>
</dbReference>
<dbReference type="SMR" id="Q9ZUT5"/>
<dbReference type="FunCoup" id="Q9ZUT5">
    <property type="interactions" value="827"/>
</dbReference>
<dbReference type="STRING" id="3702.Q9ZUT5"/>
<dbReference type="PaxDb" id="3702-AT2G37310.1"/>
<dbReference type="ProteomicsDB" id="250506"/>
<dbReference type="EnsemblPlants" id="AT2G37310.1">
    <property type="protein sequence ID" value="AT2G37310.1"/>
    <property type="gene ID" value="AT2G37310"/>
</dbReference>
<dbReference type="GeneID" id="818308"/>
<dbReference type="Gramene" id="AT2G37310.1">
    <property type="protein sequence ID" value="AT2G37310.1"/>
    <property type="gene ID" value="AT2G37310"/>
</dbReference>
<dbReference type="KEGG" id="ath:AT2G37310"/>
<dbReference type="Araport" id="AT2G37310"/>
<dbReference type="TAIR" id="AT2G37310"/>
<dbReference type="eggNOG" id="KOG4197">
    <property type="taxonomic scope" value="Eukaryota"/>
</dbReference>
<dbReference type="HOGENOM" id="CLU_002706_0_1_1"/>
<dbReference type="InParanoid" id="Q9ZUT5"/>
<dbReference type="OMA" id="YTSREMY"/>
<dbReference type="OrthoDB" id="185373at2759"/>
<dbReference type="PhylomeDB" id="Q9ZUT5"/>
<dbReference type="PRO" id="PR:Q9ZUT5"/>
<dbReference type="Proteomes" id="UP000006548">
    <property type="component" value="Chromosome 2"/>
</dbReference>
<dbReference type="ExpressionAtlas" id="Q9ZUT5">
    <property type="expression patterns" value="baseline and differential"/>
</dbReference>
<dbReference type="GO" id="GO:0003723">
    <property type="term" value="F:RNA binding"/>
    <property type="evidence" value="ECO:0007669"/>
    <property type="project" value="InterPro"/>
</dbReference>
<dbReference type="GO" id="GO:0009451">
    <property type="term" value="P:RNA modification"/>
    <property type="evidence" value="ECO:0007669"/>
    <property type="project" value="InterPro"/>
</dbReference>
<dbReference type="FunFam" id="1.25.40.10:FF:000801">
    <property type="entry name" value="Pentatricopeptide repeat-containing protein"/>
    <property type="match status" value="1"/>
</dbReference>
<dbReference type="FunFam" id="1.25.40.10:FF:001225">
    <property type="entry name" value="Pentatricopeptide repeat-containing protein"/>
    <property type="match status" value="1"/>
</dbReference>
<dbReference type="FunFam" id="1.25.40.10:FF:001537">
    <property type="entry name" value="Pentatricopeptide repeat-containing protein At2g37310"/>
    <property type="match status" value="1"/>
</dbReference>
<dbReference type="FunFam" id="1.25.40.10:FF:003397">
    <property type="entry name" value="Pentatricopeptide repeat-containing protein At2g37310"/>
    <property type="match status" value="1"/>
</dbReference>
<dbReference type="FunFam" id="1.25.40.10:FF:000205">
    <property type="entry name" value="Pentatricopeptide repeat-containing protein, mitochondrial"/>
    <property type="match status" value="1"/>
</dbReference>
<dbReference type="Gene3D" id="1.25.40.10">
    <property type="entry name" value="Tetratricopeptide repeat domain"/>
    <property type="match status" value="5"/>
</dbReference>
<dbReference type="InterPro" id="IPR046848">
    <property type="entry name" value="E_motif"/>
</dbReference>
<dbReference type="InterPro" id="IPR002885">
    <property type="entry name" value="Pentatricopeptide_rpt"/>
</dbReference>
<dbReference type="InterPro" id="IPR046960">
    <property type="entry name" value="PPR_At4g14850-like_plant"/>
</dbReference>
<dbReference type="InterPro" id="IPR011990">
    <property type="entry name" value="TPR-like_helical_dom_sf"/>
</dbReference>
<dbReference type="NCBIfam" id="TIGR00756">
    <property type="entry name" value="PPR"/>
    <property type="match status" value="7"/>
</dbReference>
<dbReference type="PANTHER" id="PTHR47926">
    <property type="entry name" value="PENTATRICOPEPTIDE REPEAT-CONTAINING PROTEIN"/>
    <property type="match status" value="1"/>
</dbReference>
<dbReference type="PANTHER" id="PTHR47926:SF472">
    <property type="entry name" value="REPEAT (PPR) SUPERFAMILY PROTEIN, PUTATIVE-RELATED"/>
    <property type="match status" value="1"/>
</dbReference>
<dbReference type="Pfam" id="PF20431">
    <property type="entry name" value="E_motif"/>
    <property type="match status" value="1"/>
</dbReference>
<dbReference type="Pfam" id="PF01535">
    <property type="entry name" value="PPR"/>
    <property type="match status" value="4"/>
</dbReference>
<dbReference type="Pfam" id="PF13041">
    <property type="entry name" value="PPR_2"/>
    <property type="match status" value="3"/>
</dbReference>
<dbReference type="SUPFAM" id="SSF48452">
    <property type="entry name" value="TPR-like"/>
    <property type="match status" value="2"/>
</dbReference>
<dbReference type="PROSITE" id="PS51375">
    <property type="entry name" value="PPR"/>
    <property type="match status" value="15"/>
</dbReference>
<feature type="chain" id="PRO_0000356050" description="Pentatricopeptide repeat-containing protein At2g37310">
    <location>
        <begin position="1"/>
        <end position="657"/>
    </location>
</feature>
<feature type="repeat" description="PPR 1">
    <location>
        <begin position="21"/>
        <end position="55"/>
    </location>
</feature>
<feature type="repeat" description="PPR 2">
    <location>
        <begin position="56"/>
        <end position="86"/>
    </location>
</feature>
<feature type="repeat" description="PPR 3">
    <location>
        <begin position="87"/>
        <end position="121"/>
    </location>
</feature>
<feature type="repeat" description="PPR 4">
    <location>
        <begin position="128"/>
        <end position="165"/>
    </location>
</feature>
<feature type="repeat" description="PPR 5">
    <location>
        <begin position="166"/>
        <end position="196"/>
    </location>
</feature>
<feature type="repeat" description="PPR 6">
    <location>
        <begin position="197"/>
        <end position="232"/>
    </location>
</feature>
<feature type="repeat" description="PPR 7">
    <location>
        <begin position="233"/>
        <end position="267"/>
    </location>
</feature>
<feature type="repeat" description="PPR 8">
    <location>
        <begin position="268"/>
        <end position="298"/>
    </location>
</feature>
<feature type="repeat" description="PPR 9">
    <location>
        <begin position="299"/>
        <end position="333"/>
    </location>
</feature>
<feature type="repeat" description="PPR 10">
    <location>
        <begin position="334"/>
        <end position="364"/>
    </location>
</feature>
<feature type="repeat" description="PPR 11">
    <location>
        <begin position="365"/>
        <end position="399"/>
    </location>
</feature>
<feature type="repeat" description="PPR 12">
    <location>
        <begin position="400"/>
        <end position="430"/>
    </location>
</feature>
<feature type="repeat" description="PPR 13">
    <location>
        <begin position="431"/>
        <end position="465"/>
    </location>
</feature>
<feature type="repeat" description="PPR 14">
    <location>
        <begin position="466"/>
        <end position="501"/>
    </location>
</feature>
<feature type="repeat" description="PPR 15">
    <location>
        <begin position="502"/>
        <end position="536"/>
    </location>
</feature>
<feature type="region of interest" description="Type E motif">
    <location>
        <begin position="537"/>
        <end position="612"/>
    </location>
</feature>
<feature type="region of interest" description="Type E(+) motif">
    <location>
        <begin position="613"/>
        <end position="643"/>
    </location>
</feature>
<sequence length="657" mass="73343">MKLGFEIQRALQGLLNKAAVDGGAYGHLIQHFTRHRLPLHVLQLHARIVVFSIKPDNFLASKLISFYTRQDRFRQALHVFDEITVRNAFSYNALLIAYTSREMYFDAFSLFLSWIGSSCYSSDAARPDSISISCVLKALSGCDDFWLGSLARQVHGFVIRGGFDSDVFVGNGMITYYTKCDNIESARKVFDEMSERDVVSWNSMISGYSQSGSFEDCKKMYKAMLACSDFKPNGVTVISVFQACGQSSDLIFGLEVHKKMIENHIQMDLSLCNAVIGFYAKCGSLDYARALFDEMSEKDSVTYGAIISGYMAHGLVKEAMALFSEMESIGLSTWNAMISGLMQNNHHEEVINSFREMIRCGSRPNTVTLSSLLPSLTYSSNLKGGKEIHAFAIRNGADNNIYVTTSIIDNYAKLGFLLGAQRVFDNCKDRSLIAWTAIITAYAVHGDSDSACSLFDQMQCLGTKPDDVTLTAVLSAFAHSGDSDMAQHIFDSMLTKYDIEPGVEHYACMVSVLSRAGKLSDAMEFISKMPIDPIAKVWGALLNGASVLGDLEIARFACDRLFEMEPENTGNYTIMANLYTQAGRWEEAEMVRNKMKRIGLKKIPGTSWIETEKGLRSFIAKDSSCERSKEMYEIIEGLVESMSDKEYIRKQELDEAY</sequence>